<organism>
    <name type="scientific">Homo sapiens</name>
    <name type="common">Human</name>
    <dbReference type="NCBI Taxonomy" id="9606"/>
    <lineage>
        <taxon>Eukaryota</taxon>
        <taxon>Metazoa</taxon>
        <taxon>Chordata</taxon>
        <taxon>Craniata</taxon>
        <taxon>Vertebrata</taxon>
        <taxon>Euteleostomi</taxon>
        <taxon>Mammalia</taxon>
        <taxon>Eutheria</taxon>
        <taxon>Euarchontoglires</taxon>
        <taxon>Primates</taxon>
        <taxon>Haplorrhini</taxon>
        <taxon>Catarrhini</taxon>
        <taxon>Hominidae</taxon>
        <taxon>Homo</taxon>
    </lineage>
</organism>
<name>SPIT2_HUMAN</name>
<evidence type="ECO:0000250" key="1"/>
<evidence type="ECO:0000255" key="2"/>
<evidence type="ECO:0000255" key="3">
    <source>
        <dbReference type="PROSITE-ProRule" id="PRU00031"/>
    </source>
</evidence>
<evidence type="ECO:0000256" key="4">
    <source>
        <dbReference type="SAM" id="MobiDB-lite"/>
    </source>
</evidence>
<evidence type="ECO:0000269" key="5">
    <source>
    </source>
</evidence>
<evidence type="ECO:0000269" key="6">
    <source>
    </source>
</evidence>
<evidence type="ECO:0000269" key="7">
    <source>
    </source>
</evidence>
<evidence type="ECO:0000269" key="8">
    <source>
    </source>
</evidence>
<evidence type="ECO:0000269" key="9">
    <source>
    </source>
</evidence>
<evidence type="ECO:0000269" key="10">
    <source>
    </source>
</evidence>
<evidence type="ECO:0000269" key="11">
    <source>
    </source>
</evidence>
<evidence type="ECO:0000269" key="12">
    <source>
    </source>
</evidence>
<evidence type="ECO:0000269" key="13">
    <source>
    </source>
</evidence>
<evidence type="ECO:0000269" key="14">
    <source>
    </source>
</evidence>
<evidence type="ECO:0000269" key="15">
    <source>
    </source>
</evidence>
<evidence type="ECO:0000269" key="16">
    <source>
    </source>
</evidence>
<evidence type="ECO:0000269" key="17">
    <source>
    </source>
</evidence>
<evidence type="ECO:0000269" key="18">
    <source>
    </source>
</evidence>
<evidence type="ECO:0000303" key="19">
    <source>
    </source>
</evidence>
<evidence type="ECO:0000305" key="20"/>
<evidence type="ECO:0007829" key="21">
    <source>
        <dbReference type="PDB" id="4U32"/>
    </source>
</evidence>
<protein>
    <recommendedName>
        <fullName>Kunitz-type protease inhibitor 2</fullName>
    </recommendedName>
    <alternativeName>
        <fullName>Hepatocyte growth factor activator inhibitor type 2</fullName>
        <shortName>HAI-2</shortName>
    </alternativeName>
    <alternativeName>
        <fullName>Placental bikunin</fullName>
    </alternativeName>
</protein>
<dbReference type="EMBL" id="AB006534">
    <property type="protein sequence ID" value="BAA25024.1"/>
    <property type="molecule type" value="mRNA"/>
</dbReference>
<dbReference type="EMBL" id="U78095">
    <property type="protein sequence ID" value="AAC02781.1"/>
    <property type="molecule type" value="mRNA"/>
</dbReference>
<dbReference type="EMBL" id="AF027205">
    <property type="protein sequence ID" value="AAB84031.1"/>
    <property type="molecule type" value="mRNA"/>
</dbReference>
<dbReference type="EMBL" id="AK291532">
    <property type="protein sequence ID" value="BAF84221.1"/>
    <property type="molecule type" value="mRNA"/>
</dbReference>
<dbReference type="EMBL" id="AK297154">
    <property type="protein sequence ID" value="BAG59653.1"/>
    <property type="molecule type" value="mRNA"/>
</dbReference>
<dbReference type="EMBL" id="BT020115">
    <property type="protein sequence ID" value="AAV38918.1"/>
    <property type="molecule type" value="mRNA"/>
</dbReference>
<dbReference type="EMBL" id="BT020116">
    <property type="protein sequence ID" value="AAV38919.1"/>
    <property type="molecule type" value="mRNA"/>
</dbReference>
<dbReference type="EMBL" id="BT020117">
    <property type="protein sequence ID" value="AAV38920.1"/>
    <property type="molecule type" value="mRNA"/>
</dbReference>
<dbReference type="EMBL" id="AC011479">
    <property type="status" value="NOT_ANNOTATED_CDS"/>
    <property type="molecule type" value="Genomic_DNA"/>
</dbReference>
<dbReference type="EMBL" id="CH471126">
    <property type="protein sequence ID" value="EAW56766.1"/>
    <property type="molecule type" value="Genomic_DNA"/>
</dbReference>
<dbReference type="EMBL" id="CH471126">
    <property type="protein sequence ID" value="EAW56767.1"/>
    <property type="molecule type" value="Genomic_DNA"/>
</dbReference>
<dbReference type="EMBL" id="BC001668">
    <property type="protein sequence ID" value="AAH01668.1"/>
    <property type="molecule type" value="mRNA"/>
</dbReference>
<dbReference type="EMBL" id="BC007705">
    <property type="protein sequence ID" value="AAH07705.1"/>
    <property type="molecule type" value="mRNA"/>
</dbReference>
<dbReference type="EMBL" id="BC011951">
    <property type="protein sequence ID" value="AAH11951.1"/>
    <property type="molecule type" value="mRNA"/>
</dbReference>
<dbReference type="EMBL" id="BC011955">
    <property type="protein sequence ID" value="AAH11955.1"/>
    <property type="molecule type" value="mRNA"/>
</dbReference>
<dbReference type="EMBL" id="BC012868">
    <property type="protein sequence ID" value="AAH12868.1"/>
    <property type="molecule type" value="mRNA"/>
</dbReference>
<dbReference type="CCDS" id="CCDS12510.1">
    <molecule id="O43291-1"/>
</dbReference>
<dbReference type="CCDS" id="CCDS54261.1">
    <molecule id="O43291-2"/>
</dbReference>
<dbReference type="RefSeq" id="NP_001159575.1">
    <molecule id="O43291-2"/>
    <property type="nucleotide sequence ID" value="NM_001166103.2"/>
</dbReference>
<dbReference type="RefSeq" id="NP_066925.1">
    <molecule id="O43291-1"/>
    <property type="nucleotide sequence ID" value="NM_021102.4"/>
</dbReference>
<dbReference type="PDB" id="4U32">
    <property type="method" value="X-ray"/>
    <property type="resolution" value="1.65 A"/>
    <property type="chains" value="X=34-88"/>
</dbReference>
<dbReference type="PDBsum" id="4U32"/>
<dbReference type="SMR" id="O43291"/>
<dbReference type="BioGRID" id="115896">
    <property type="interactions" value="150"/>
</dbReference>
<dbReference type="FunCoup" id="O43291">
    <property type="interactions" value="301"/>
</dbReference>
<dbReference type="IntAct" id="O43291">
    <property type="interactions" value="97"/>
</dbReference>
<dbReference type="MINT" id="O43291"/>
<dbReference type="STRING" id="9606.ENSP00000301244"/>
<dbReference type="MEROPS" id="I02.009"/>
<dbReference type="MEROPS" id="I02.010"/>
<dbReference type="TCDB" id="8.B.13.2.3">
    <property type="family name" value="the kunitz-type serine protease inhibitor (hai) family"/>
</dbReference>
<dbReference type="GlyCosmos" id="O43291">
    <property type="glycosylation" value="3 sites, 1 glycan"/>
</dbReference>
<dbReference type="GlyGen" id="O43291">
    <property type="glycosylation" value="7 sites, 4 N-linked glycans (1 site), 3 O-linked glycans (5 sites)"/>
</dbReference>
<dbReference type="iPTMnet" id="O43291"/>
<dbReference type="PhosphoSitePlus" id="O43291"/>
<dbReference type="SwissPalm" id="O43291"/>
<dbReference type="BioMuta" id="SPINT2"/>
<dbReference type="jPOST" id="O43291"/>
<dbReference type="MassIVE" id="O43291"/>
<dbReference type="PaxDb" id="9606-ENSP00000301244"/>
<dbReference type="PeptideAtlas" id="O43291"/>
<dbReference type="ProteomicsDB" id="48859">
    <molecule id="O43291-1"/>
</dbReference>
<dbReference type="ProteomicsDB" id="48860">
    <molecule id="O43291-2"/>
</dbReference>
<dbReference type="Pumba" id="O43291"/>
<dbReference type="Antibodypedia" id="2598">
    <property type="antibodies" value="388 antibodies from 32 providers"/>
</dbReference>
<dbReference type="DNASU" id="10653"/>
<dbReference type="Ensembl" id="ENST00000301244.12">
    <molecule id="O43291-1"/>
    <property type="protein sequence ID" value="ENSP00000301244.5"/>
    <property type="gene ID" value="ENSG00000167642.13"/>
</dbReference>
<dbReference type="Ensembl" id="ENST00000454580.7">
    <molecule id="O43291-2"/>
    <property type="protein sequence ID" value="ENSP00000389788.2"/>
    <property type="gene ID" value="ENSG00000167642.13"/>
</dbReference>
<dbReference type="GeneID" id="10653"/>
<dbReference type="KEGG" id="hsa:10653"/>
<dbReference type="MANE-Select" id="ENST00000301244.12">
    <property type="protein sequence ID" value="ENSP00000301244.5"/>
    <property type="RefSeq nucleotide sequence ID" value="NM_021102.4"/>
    <property type="RefSeq protein sequence ID" value="NP_066925.1"/>
</dbReference>
<dbReference type="UCSC" id="uc002ohr.2">
    <molecule id="O43291-1"/>
    <property type="organism name" value="human"/>
</dbReference>
<dbReference type="AGR" id="HGNC:11247"/>
<dbReference type="CTD" id="10653"/>
<dbReference type="DisGeNET" id="10653"/>
<dbReference type="GeneCards" id="SPINT2"/>
<dbReference type="HGNC" id="HGNC:11247">
    <property type="gene designation" value="SPINT2"/>
</dbReference>
<dbReference type="HPA" id="ENSG00000167642">
    <property type="expression patterns" value="Low tissue specificity"/>
</dbReference>
<dbReference type="MalaCards" id="SPINT2"/>
<dbReference type="MIM" id="270420">
    <property type="type" value="phenotype"/>
</dbReference>
<dbReference type="MIM" id="605124">
    <property type="type" value="gene"/>
</dbReference>
<dbReference type="neXtProt" id="NX_O43291"/>
<dbReference type="OpenTargets" id="ENSG00000167642"/>
<dbReference type="Orphanet" id="563708">
    <property type="disease" value="Syndromic congenital sodium diarrhea"/>
</dbReference>
<dbReference type="PharmGKB" id="PA36077"/>
<dbReference type="VEuPathDB" id="HostDB:ENSG00000167642"/>
<dbReference type="eggNOG" id="KOG4295">
    <property type="taxonomic scope" value="Eukaryota"/>
</dbReference>
<dbReference type="GeneTree" id="ENSGT00940000160348"/>
<dbReference type="HOGENOM" id="CLU_140751_0_0_1"/>
<dbReference type="InParanoid" id="O43291"/>
<dbReference type="OMA" id="KEECMHR"/>
<dbReference type="OrthoDB" id="196393at2759"/>
<dbReference type="PAN-GO" id="O43291">
    <property type="GO annotations" value="2 GO annotations based on evolutionary models"/>
</dbReference>
<dbReference type="PhylomeDB" id="O43291"/>
<dbReference type="TreeFam" id="TF326553"/>
<dbReference type="PathwayCommons" id="O43291"/>
<dbReference type="Reactome" id="R-HSA-6806942">
    <property type="pathway name" value="MET Receptor Activation"/>
</dbReference>
<dbReference type="Reactome" id="R-HSA-8852405">
    <property type="pathway name" value="Signaling by MST1"/>
</dbReference>
<dbReference type="SignaLink" id="O43291"/>
<dbReference type="BioGRID-ORCS" id="10653">
    <property type="hits" value="27 hits in 1147 CRISPR screens"/>
</dbReference>
<dbReference type="ChiTaRS" id="SPINT2">
    <property type="organism name" value="human"/>
</dbReference>
<dbReference type="EvolutionaryTrace" id="O43291"/>
<dbReference type="GeneWiki" id="SPINT2"/>
<dbReference type="GenomeRNAi" id="10653"/>
<dbReference type="Pharos" id="O43291">
    <property type="development level" value="Tbio"/>
</dbReference>
<dbReference type="PRO" id="PR:O43291"/>
<dbReference type="Proteomes" id="UP000005640">
    <property type="component" value="Chromosome 19"/>
</dbReference>
<dbReference type="RNAct" id="O43291">
    <property type="molecule type" value="protein"/>
</dbReference>
<dbReference type="Bgee" id="ENSG00000167642">
    <property type="expression patterns" value="Expressed in type B pancreatic cell and 199 other cell types or tissues"/>
</dbReference>
<dbReference type="ExpressionAtlas" id="O43291">
    <property type="expression patterns" value="baseline and differential"/>
</dbReference>
<dbReference type="GO" id="GO:0005737">
    <property type="term" value="C:cytoplasm"/>
    <property type="evidence" value="ECO:0000314"/>
    <property type="project" value="HGNC-UCL"/>
</dbReference>
<dbReference type="GO" id="GO:0005576">
    <property type="term" value="C:extracellular region"/>
    <property type="evidence" value="ECO:0000304"/>
    <property type="project" value="ProtInc"/>
</dbReference>
<dbReference type="GO" id="GO:0005794">
    <property type="term" value="C:Golgi apparatus"/>
    <property type="evidence" value="ECO:0000314"/>
    <property type="project" value="HPA"/>
</dbReference>
<dbReference type="GO" id="GO:0043231">
    <property type="term" value="C:intracellular membrane-bounded organelle"/>
    <property type="evidence" value="ECO:0000314"/>
    <property type="project" value="HPA"/>
</dbReference>
<dbReference type="GO" id="GO:0016020">
    <property type="term" value="C:membrane"/>
    <property type="evidence" value="ECO:0000304"/>
    <property type="project" value="ProtInc"/>
</dbReference>
<dbReference type="GO" id="GO:0005886">
    <property type="term" value="C:plasma membrane"/>
    <property type="evidence" value="ECO:0007669"/>
    <property type="project" value="UniProtKB-SubCell"/>
</dbReference>
<dbReference type="GO" id="GO:0004866">
    <property type="term" value="F:endopeptidase inhibitor activity"/>
    <property type="evidence" value="ECO:0000304"/>
    <property type="project" value="ProtInc"/>
</dbReference>
<dbReference type="GO" id="GO:0004867">
    <property type="term" value="F:serine-type endopeptidase inhibitor activity"/>
    <property type="evidence" value="ECO:0000314"/>
    <property type="project" value="UniProtKB"/>
</dbReference>
<dbReference type="GO" id="GO:0071711">
    <property type="term" value="P:basement membrane organization"/>
    <property type="evidence" value="ECO:0007669"/>
    <property type="project" value="Ensembl"/>
</dbReference>
<dbReference type="GO" id="GO:0071773">
    <property type="term" value="P:cellular response to BMP stimulus"/>
    <property type="evidence" value="ECO:0007669"/>
    <property type="project" value="Ensembl"/>
</dbReference>
<dbReference type="GO" id="GO:0060672">
    <property type="term" value="P:epithelial cell morphogenesis involved in placental branching"/>
    <property type="evidence" value="ECO:0007669"/>
    <property type="project" value="Ensembl"/>
</dbReference>
<dbReference type="GO" id="GO:0007163">
    <property type="term" value="P:establishment or maintenance of cell polarity"/>
    <property type="evidence" value="ECO:0007669"/>
    <property type="project" value="Ensembl"/>
</dbReference>
<dbReference type="GO" id="GO:2000146">
    <property type="term" value="P:negative regulation of cell motility"/>
    <property type="evidence" value="ECO:0000314"/>
    <property type="project" value="MGI"/>
</dbReference>
<dbReference type="GO" id="GO:0022408">
    <property type="term" value="P:negative regulation of cell-cell adhesion"/>
    <property type="evidence" value="ECO:0000314"/>
    <property type="project" value="MGI"/>
</dbReference>
<dbReference type="GO" id="GO:2000178">
    <property type="term" value="P:negative regulation of neural precursor cell proliferation"/>
    <property type="evidence" value="ECO:0007669"/>
    <property type="project" value="Ensembl"/>
</dbReference>
<dbReference type="GO" id="GO:0001843">
    <property type="term" value="P:neural tube closure"/>
    <property type="evidence" value="ECO:0007669"/>
    <property type="project" value="Ensembl"/>
</dbReference>
<dbReference type="CDD" id="cd22621">
    <property type="entry name" value="Kunitz_HAI2_1-like"/>
    <property type="match status" value="1"/>
</dbReference>
<dbReference type="CDD" id="cd22622">
    <property type="entry name" value="Kunitz_HAI2_2-like"/>
    <property type="match status" value="1"/>
</dbReference>
<dbReference type="FunFam" id="4.10.410.10:FF:000014">
    <property type="entry name" value="Serine peptidase inhibitor, Kunitz type, 2"/>
    <property type="match status" value="2"/>
</dbReference>
<dbReference type="Gene3D" id="4.10.410.10">
    <property type="entry name" value="Pancreatic trypsin inhibitor Kunitz domain"/>
    <property type="match status" value="2"/>
</dbReference>
<dbReference type="InterPro" id="IPR002223">
    <property type="entry name" value="Kunitz_BPTI"/>
</dbReference>
<dbReference type="InterPro" id="IPR036880">
    <property type="entry name" value="Kunitz_BPTI_sf"/>
</dbReference>
<dbReference type="InterPro" id="IPR020901">
    <property type="entry name" value="Prtase_inh_Kunz-CS"/>
</dbReference>
<dbReference type="PANTHER" id="PTHR47247">
    <property type="entry name" value="KUNITZ-TYPE PROTEASE INHIBITOR 2"/>
    <property type="match status" value="1"/>
</dbReference>
<dbReference type="PANTHER" id="PTHR47247:SF1">
    <property type="entry name" value="KUNITZ-TYPE PROTEASE INHIBITOR 2"/>
    <property type="match status" value="1"/>
</dbReference>
<dbReference type="Pfam" id="PF00014">
    <property type="entry name" value="Kunitz_BPTI"/>
    <property type="match status" value="2"/>
</dbReference>
<dbReference type="PRINTS" id="PR00759">
    <property type="entry name" value="BASICPTASE"/>
</dbReference>
<dbReference type="SMART" id="SM00131">
    <property type="entry name" value="KU"/>
    <property type="match status" value="2"/>
</dbReference>
<dbReference type="SUPFAM" id="SSF57362">
    <property type="entry name" value="BPTI-like"/>
    <property type="match status" value="2"/>
</dbReference>
<dbReference type="PROSITE" id="PS00280">
    <property type="entry name" value="BPTI_KUNITZ_1"/>
    <property type="match status" value="2"/>
</dbReference>
<dbReference type="PROSITE" id="PS50279">
    <property type="entry name" value="BPTI_KUNITZ_2"/>
    <property type="match status" value="2"/>
</dbReference>
<proteinExistence type="evidence at protein level"/>
<keyword id="KW-0002">3D-structure</keyword>
<keyword id="KW-0025">Alternative splicing</keyword>
<keyword id="KW-1003">Cell membrane</keyword>
<keyword id="KW-0963">Cytoplasm</keyword>
<keyword id="KW-0903">Direct protein sequencing</keyword>
<keyword id="KW-0225">Disease variant</keyword>
<keyword id="KW-1015">Disulfide bond</keyword>
<keyword id="KW-0325">Glycoprotein</keyword>
<keyword id="KW-0472">Membrane</keyword>
<keyword id="KW-0646">Protease inhibitor</keyword>
<keyword id="KW-1267">Proteomics identification</keyword>
<keyword id="KW-1185">Reference proteome</keyword>
<keyword id="KW-0677">Repeat</keyword>
<keyword id="KW-0722">Serine protease inhibitor</keyword>
<keyword id="KW-0732">Signal</keyword>
<keyword id="KW-0812">Transmembrane</keyword>
<keyword id="KW-1133">Transmembrane helix</keyword>
<gene>
    <name type="primary">SPINT2</name>
    <name type="synonym">HAI2</name>
    <name type="synonym">KOP</name>
</gene>
<sequence>MAQLCGLRRSRAFLALLGSLLLSGVLAADRERSIHDFCLVSKVVGRCRASMPRWWYNVTDGSCQLFVYGGCDGNSNNYLTKEECLKKCATVTENATGDLATSRNAADSSVPSAPRRQDSEDHSSDMFNYEEYCTANAVTGPCRASFPRWYFDVERNSCNNFIYGGCRGNKNSYRSEEACMLRCFRQQENPPLPLGSKVVVLAGLFVMVLILFLGASMVYLIRVARRNQERALRTVWSSGDDKEQLVKNTYVL</sequence>
<reference key="1">
    <citation type="journal article" date="1997" name="J. Biol. Chem.">
        <title>Purification and cloning of hepatocyte growth factor activator inhibitor type 2, a Kunitz-type serine protease inhibitor.</title>
        <authorList>
            <person name="Kawaguchi T."/>
            <person name="Qin L."/>
            <person name="Shimomura T."/>
            <person name="Kondo J."/>
            <person name="Matsumoto K."/>
            <person name="Denda K."/>
            <person name="Kitamura N."/>
        </authorList>
    </citation>
    <scope>NUCLEOTIDE SEQUENCE [MRNA] (ISOFORM 1)</scope>
    <scope>FUNCTION</scope>
    <scope>TISSUE SPECIFICITY</scope>
</reference>
<reference key="2">
    <citation type="journal article" date="1997" name="J. Biol. Chem.">
        <title>Identification and cloning of human placental bikunin, a novel serine protease inhibitor containing two Kunitz domains.</title>
        <authorList>
            <person name="Marlor C.W."/>
            <person name="Delaria K.A."/>
            <person name="Davis G."/>
            <person name="Muller D.K."/>
            <person name="Greve J.M."/>
            <person name="Tamburini P.P."/>
        </authorList>
    </citation>
    <scope>NUCLEOTIDE SEQUENCE [MRNA] (ISOFORM 1)</scope>
    <scope>PROTEIN SEQUENCE OF 28-74</scope>
    <scope>FUNCTION</scope>
    <source>
        <tissue>Placenta</tissue>
    </source>
</reference>
<reference key="3">
    <citation type="journal article" date="1998" name="Biochim. Biophys. Acta">
        <title>Cloning of a new Kunitz-type protease inhibitor with a putative transmembrane domain overexpressed in pancreatic cancer.</title>
        <authorList>
            <person name="Mueller-Pillasch F."/>
            <person name="Wallrapp C."/>
            <person name="Bartels K."/>
            <person name="Varga G."/>
            <person name="Friess H."/>
            <person name="Buechler M."/>
            <person name="Adler G."/>
            <person name="Gress T.M."/>
        </authorList>
    </citation>
    <scope>NUCLEOTIDE SEQUENCE [MRNA] (ISOFORM 1)</scope>
    <source>
        <tissue>Pancreatic cancer</tissue>
    </source>
</reference>
<reference key="4">
    <citation type="journal article" date="2004" name="Nat. Genet.">
        <title>Complete sequencing and characterization of 21,243 full-length human cDNAs.</title>
        <authorList>
            <person name="Ota T."/>
            <person name="Suzuki Y."/>
            <person name="Nishikawa T."/>
            <person name="Otsuki T."/>
            <person name="Sugiyama T."/>
            <person name="Irie R."/>
            <person name="Wakamatsu A."/>
            <person name="Hayashi K."/>
            <person name="Sato H."/>
            <person name="Nagai K."/>
            <person name="Kimura K."/>
            <person name="Makita H."/>
            <person name="Sekine M."/>
            <person name="Obayashi M."/>
            <person name="Nishi T."/>
            <person name="Shibahara T."/>
            <person name="Tanaka T."/>
            <person name="Ishii S."/>
            <person name="Yamamoto J."/>
            <person name="Saito K."/>
            <person name="Kawai Y."/>
            <person name="Isono Y."/>
            <person name="Nakamura Y."/>
            <person name="Nagahari K."/>
            <person name="Murakami K."/>
            <person name="Yasuda T."/>
            <person name="Iwayanagi T."/>
            <person name="Wagatsuma M."/>
            <person name="Shiratori A."/>
            <person name="Sudo H."/>
            <person name="Hosoiri T."/>
            <person name="Kaku Y."/>
            <person name="Kodaira H."/>
            <person name="Kondo H."/>
            <person name="Sugawara M."/>
            <person name="Takahashi M."/>
            <person name="Kanda K."/>
            <person name="Yokoi T."/>
            <person name="Furuya T."/>
            <person name="Kikkawa E."/>
            <person name="Omura Y."/>
            <person name="Abe K."/>
            <person name="Kamihara K."/>
            <person name="Katsuta N."/>
            <person name="Sato K."/>
            <person name="Tanikawa M."/>
            <person name="Yamazaki M."/>
            <person name="Ninomiya K."/>
            <person name="Ishibashi T."/>
            <person name="Yamashita H."/>
            <person name="Murakawa K."/>
            <person name="Fujimori K."/>
            <person name="Tanai H."/>
            <person name="Kimata M."/>
            <person name="Watanabe M."/>
            <person name="Hiraoka S."/>
            <person name="Chiba Y."/>
            <person name="Ishida S."/>
            <person name="Ono Y."/>
            <person name="Takiguchi S."/>
            <person name="Watanabe S."/>
            <person name="Yosida M."/>
            <person name="Hotuta T."/>
            <person name="Kusano J."/>
            <person name="Kanehori K."/>
            <person name="Takahashi-Fujii A."/>
            <person name="Hara H."/>
            <person name="Tanase T.-O."/>
            <person name="Nomura Y."/>
            <person name="Togiya S."/>
            <person name="Komai F."/>
            <person name="Hara R."/>
            <person name="Takeuchi K."/>
            <person name="Arita M."/>
            <person name="Imose N."/>
            <person name="Musashino K."/>
            <person name="Yuuki H."/>
            <person name="Oshima A."/>
            <person name="Sasaki N."/>
            <person name="Aotsuka S."/>
            <person name="Yoshikawa Y."/>
            <person name="Matsunawa H."/>
            <person name="Ichihara T."/>
            <person name="Shiohata N."/>
            <person name="Sano S."/>
            <person name="Moriya S."/>
            <person name="Momiyama H."/>
            <person name="Satoh N."/>
            <person name="Takami S."/>
            <person name="Terashima Y."/>
            <person name="Suzuki O."/>
            <person name="Nakagawa S."/>
            <person name="Senoh A."/>
            <person name="Mizoguchi H."/>
            <person name="Goto Y."/>
            <person name="Shimizu F."/>
            <person name="Wakebe H."/>
            <person name="Hishigaki H."/>
            <person name="Watanabe T."/>
            <person name="Sugiyama A."/>
            <person name="Takemoto M."/>
            <person name="Kawakami B."/>
            <person name="Yamazaki M."/>
            <person name="Watanabe K."/>
            <person name="Kumagai A."/>
            <person name="Itakura S."/>
            <person name="Fukuzumi Y."/>
            <person name="Fujimori Y."/>
            <person name="Komiyama M."/>
            <person name="Tashiro H."/>
            <person name="Tanigami A."/>
            <person name="Fujiwara T."/>
            <person name="Ono T."/>
            <person name="Yamada K."/>
            <person name="Fujii Y."/>
            <person name="Ozaki K."/>
            <person name="Hirao M."/>
            <person name="Ohmori Y."/>
            <person name="Kawabata A."/>
            <person name="Hikiji T."/>
            <person name="Kobatake N."/>
            <person name="Inagaki H."/>
            <person name="Ikema Y."/>
            <person name="Okamoto S."/>
            <person name="Okitani R."/>
            <person name="Kawakami T."/>
            <person name="Noguchi S."/>
            <person name="Itoh T."/>
            <person name="Shigeta K."/>
            <person name="Senba T."/>
            <person name="Matsumura K."/>
            <person name="Nakajima Y."/>
            <person name="Mizuno T."/>
            <person name="Morinaga M."/>
            <person name="Sasaki M."/>
            <person name="Togashi T."/>
            <person name="Oyama M."/>
            <person name="Hata H."/>
            <person name="Watanabe M."/>
            <person name="Komatsu T."/>
            <person name="Mizushima-Sugano J."/>
            <person name="Satoh T."/>
            <person name="Shirai Y."/>
            <person name="Takahashi Y."/>
            <person name="Nakagawa K."/>
            <person name="Okumura K."/>
            <person name="Nagase T."/>
            <person name="Nomura N."/>
            <person name="Kikuchi H."/>
            <person name="Masuho Y."/>
            <person name="Yamashita R."/>
            <person name="Nakai K."/>
            <person name="Yada T."/>
            <person name="Nakamura Y."/>
            <person name="Ohara O."/>
            <person name="Isogai T."/>
            <person name="Sugano S."/>
        </authorList>
    </citation>
    <scope>NUCLEOTIDE SEQUENCE [LARGE SCALE MRNA] (ISOFORMS 1 AND 2)</scope>
    <source>
        <tissue>Placenta</tissue>
    </source>
</reference>
<reference key="5">
    <citation type="submission" date="2004-10" db="EMBL/GenBank/DDBJ databases">
        <title>Cloning of human full-length CDSs in BD Creator(TM) system donor vector.</title>
        <authorList>
            <person name="Kalnine N."/>
            <person name="Chen X."/>
            <person name="Rolfs A."/>
            <person name="Halleck A."/>
            <person name="Hines L."/>
            <person name="Eisenstein S."/>
            <person name="Koundinya M."/>
            <person name="Raphael J."/>
            <person name="Moreira D."/>
            <person name="Kelley T."/>
            <person name="LaBaer J."/>
            <person name="Lin Y."/>
            <person name="Phelan M."/>
            <person name="Farmer A."/>
        </authorList>
    </citation>
    <scope>NUCLEOTIDE SEQUENCE [LARGE SCALE MRNA] (ISOFORM 1)</scope>
</reference>
<reference key="6">
    <citation type="journal article" date="2004" name="Nature">
        <title>The DNA sequence and biology of human chromosome 19.</title>
        <authorList>
            <person name="Grimwood J."/>
            <person name="Gordon L.A."/>
            <person name="Olsen A.S."/>
            <person name="Terry A."/>
            <person name="Schmutz J."/>
            <person name="Lamerdin J.E."/>
            <person name="Hellsten U."/>
            <person name="Goodstein D."/>
            <person name="Couronne O."/>
            <person name="Tran-Gyamfi M."/>
            <person name="Aerts A."/>
            <person name="Altherr M."/>
            <person name="Ashworth L."/>
            <person name="Bajorek E."/>
            <person name="Black S."/>
            <person name="Branscomb E."/>
            <person name="Caenepeel S."/>
            <person name="Carrano A.V."/>
            <person name="Caoile C."/>
            <person name="Chan Y.M."/>
            <person name="Christensen M."/>
            <person name="Cleland C.A."/>
            <person name="Copeland A."/>
            <person name="Dalin E."/>
            <person name="Dehal P."/>
            <person name="Denys M."/>
            <person name="Detter J.C."/>
            <person name="Escobar J."/>
            <person name="Flowers D."/>
            <person name="Fotopulos D."/>
            <person name="Garcia C."/>
            <person name="Georgescu A.M."/>
            <person name="Glavina T."/>
            <person name="Gomez M."/>
            <person name="Gonzales E."/>
            <person name="Groza M."/>
            <person name="Hammon N."/>
            <person name="Hawkins T."/>
            <person name="Haydu L."/>
            <person name="Ho I."/>
            <person name="Huang W."/>
            <person name="Israni S."/>
            <person name="Jett J."/>
            <person name="Kadner K."/>
            <person name="Kimball H."/>
            <person name="Kobayashi A."/>
            <person name="Larionov V."/>
            <person name="Leem S.-H."/>
            <person name="Lopez F."/>
            <person name="Lou Y."/>
            <person name="Lowry S."/>
            <person name="Malfatti S."/>
            <person name="Martinez D."/>
            <person name="McCready P.M."/>
            <person name="Medina C."/>
            <person name="Morgan J."/>
            <person name="Nelson K."/>
            <person name="Nolan M."/>
            <person name="Ovcharenko I."/>
            <person name="Pitluck S."/>
            <person name="Pollard M."/>
            <person name="Popkie A.P."/>
            <person name="Predki P."/>
            <person name="Quan G."/>
            <person name="Ramirez L."/>
            <person name="Rash S."/>
            <person name="Retterer J."/>
            <person name="Rodriguez A."/>
            <person name="Rogers S."/>
            <person name="Salamov A."/>
            <person name="Salazar A."/>
            <person name="She X."/>
            <person name="Smith D."/>
            <person name="Slezak T."/>
            <person name="Solovyev V."/>
            <person name="Thayer N."/>
            <person name="Tice H."/>
            <person name="Tsai M."/>
            <person name="Ustaszewska A."/>
            <person name="Vo N."/>
            <person name="Wagner M."/>
            <person name="Wheeler J."/>
            <person name="Wu K."/>
            <person name="Xie G."/>
            <person name="Yang J."/>
            <person name="Dubchak I."/>
            <person name="Furey T.S."/>
            <person name="DeJong P."/>
            <person name="Dickson M."/>
            <person name="Gordon D."/>
            <person name="Eichler E.E."/>
            <person name="Pennacchio L.A."/>
            <person name="Richardson P."/>
            <person name="Stubbs L."/>
            <person name="Rokhsar D.S."/>
            <person name="Myers R.M."/>
            <person name="Rubin E.M."/>
            <person name="Lucas S.M."/>
        </authorList>
    </citation>
    <scope>NUCLEOTIDE SEQUENCE [LARGE SCALE GENOMIC DNA]</scope>
</reference>
<reference key="7">
    <citation type="submission" date="2005-07" db="EMBL/GenBank/DDBJ databases">
        <authorList>
            <person name="Mural R.J."/>
            <person name="Istrail S."/>
            <person name="Sutton G.G."/>
            <person name="Florea L."/>
            <person name="Halpern A.L."/>
            <person name="Mobarry C.M."/>
            <person name="Lippert R."/>
            <person name="Walenz B."/>
            <person name="Shatkay H."/>
            <person name="Dew I."/>
            <person name="Miller J.R."/>
            <person name="Flanigan M.J."/>
            <person name="Edwards N.J."/>
            <person name="Bolanos R."/>
            <person name="Fasulo D."/>
            <person name="Halldorsson B.V."/>
            <person name="Hannenhalli S."/>
            <person name="Turner R."/>
            <person name="Yooseph S."/>
            <person name="Lu F."/>
            <person name="Nusskern D.R."/>
            <person name="Shue B.C."/>
            <person name="Zheng X.H."/>
            <person name="Zhong F."/>
            <person name="Delcher A.L."/>
            <person name="Huson D.H."/>
            <person name="Kravitz S.A."/>
            <person name="Mouchard L."/>
            <person name="Reinert K."/>
            <person name="Remington K.A."/>
            <person name="Clark A.G."/>
            <person name="Waterman M.S."/>
            <person name="Eichler E.E."/>
            <person name="Adams M.D."/>
            <person name="Hunkapiller M.W."/>
            <person name="Myers E.W."/>
            <person name="Venter J.C."/>
        </authorList>
    </citation>
    <scope>NUCLEOTIDE SEQUENCE [LARGE SCALE GENOMIC DNA]</scope>
</reference>
<reference key="8">
    <citation type="journal article" date="2004" name="Genome Res.">
        <title>The status, quality, and expansion of the NIH full-length cDNA project: the Mammalian Gene Collection (MGC).</title>
        <authorList>
            <consortium name="The MGC Project Team"/>
        </authorList>
    </citation>
    <scope>NUCLEOTIDE SEQUENCE [LARGE SCALE MRNA] (ISOFORM 1)</scope>
    <scope>VARIANT LEU-200</scope>
    <source>
        <tissue>Colon</tissue>
        <tissue>Ovary</tissue>
    </source>
</reference>
<reference key="9">
    <citation type="journal article" date="2004" name="Protein Sci.">
        <title>Signal peptide prediction based on analysis of experimentally verified cleavage sites.</title>
        <authorList>
            <person name="Zhang Z."/>
            <person name="Henzel W.J."/>
        </authorList>
    </citation>
    <scope>PROTEIN SEQUENCE OF 28-42</scope>
</reference>
<reference key="10">
    <citation type="journal article" date="2010" name="FEBS J.">
        <title>TMPRSS13, a type II transmembrane serine protease, is inhibited by hepatocyte growth factor activator inhibitor type 1 and activates pro-hepatocyte growth factor.</title>
        <authorList>
            <person name="Hashimoto T."/>
            <person name="Kato M."/>
            <person name="Shimomura T."/>
            <person name="Kitamura N."/>
        </authorList>
    </citation>
    <scope>FUNCTION</scope>
</reference>
<reference key="11">
    <citation type="journal article" date="2017" name="J. Biol. Chem.">
        <title>Phosphorylation of the type II transmembrane serine protease, TMPRSS13, in hepatocyte growth factor activator inhibitor-1 and -2-mediated cell-surface localization.</title>
        <authorList>
            <person name="Murray A.S."/>
            <person name="Varela F.A."/>
            <person name="Hyland T.E."/>
            <person name="Schoenbeck A.J."/>
            <person name="White J.M."/>
            <person name="Tanabe L.M."/>
            <person name="Todi S.V."/>
            <person name="List K."/>
        </authorList>
    </citation>
    <scope>FUNCTION</scope>
    <scope>INTERACTION WITH TMPRSS13</scope>
    <scope>SUBCELLULAR LOCATION</scope>
</reference>
<reference key="12">
    <citation type="journal article" date="2021" name="J. Biol. Chem.">
        <title>Posttranslational modifications of serine protease TMPRSS13 regulate zymogen activation, proteolytic activity, and cell surface localization.</title>
        <authorList>
            <person name="Martin C.E."/>
            <person name="Murray A.S."/>
            <person name="Sala-Hamrick K.E."/>
            <person name="Mackinder J.R."/>
            <person name="Harrison E.C."/>
            <person name="Lundgren J.G."/>
            <person name="Varela F.A."/>
            <person name="List K."/>
        </authorList>
    </citation>
    <scope>INTERACTION WITH TMPRSS13</scope>
    <scope>SUBCELLULAR LOCATION</scope>
</reference>
<reference key="13">
    <citation type="journal article" date="2009" name="Am. J. Hum. Genet.">
        <title>Mutations in SPINT2 cause a syndromic form of congenital sodium diarrhea.</title>
        <authorList>
            <person name="Heinz-Erian P."/>
            <person name="Mueller T."/>
            <person name="Krabichler B."/>
            <person name="Schranz M."/>
            <person name="Becker C."/>
            <person name="Rueschendorf F."/>
            <person name="Nuernberg P."/>
            <person name="Rossier B."/>
            <person name="Vujic M."/>
            <person name="Booth I.W."/>
            <person name="Holmberg C."/>
            <person name="Wijmenga C."/>
            <person name="Grigelioniene G."/>
            <person name="Kneepkens C.M.F."/>
            <person name="Rosipal S."/>
            <person name="Mistrik M."/>
            <person name="Kappler M."/>
            <person name="Michaud L."/>
            <person name="Doczy L.-C."/>
            <person name="Siu V.M."/>
            <person name="Krantz M."/>
            <person name="Zoller H."/>
            <person name="Utermann G."/>
            <person name="Janecke A.R."/>
        </authorList>
    </citation>
    <scope>VARIANT DIAR3 CYS-163</scope>
    <scope>CHARACTERIZATION OF VARIANT DIAR3 CYS-163</scope>
    <scope>INVOLVEMENT IN DIAR3</scope>
</reference>
<reference key="14">
    <citation type="journal article" date="2010" name="Clin. Dysmorphol.">
        <title>Case of syndromic tufting enteropathy harbors SPINT2 mutation seen in congenital sodium diarrhea.</title>
        <authorList>
            <person name="Sivagnanam M."/>
            <person name="Janecke A.R."/>
            <person name="Mueller T."/>
            <person name="Heinz-Erian P."/>
            <person name="Taylor S."/>
            <person name="Bird L.M."/>
        </authorList>
    </citation>
    <scope>VARIANT DIAR3 CYS-163</scope>
    <scope>INVOLVEMENT IN DIAR3</scope>
</reference>
<reference key="15">
    <citation type="journal article" date="2014" name="Hum. Genet.">
        <title>Genetic characterization of congenital tufting enteropathy: epcam associated phenotype and involvement of SPINT2 in the syndromic form.</title>
        <authorList>
            <person name="Salomon J."/>
            <person name="Goulet O."/>
            <person name="Canioni D."/>
            <person name="Brousse N."/>
            <person name="Lemale J."/>
            <person name="Tounian P."/>
            <person name="Coulomb A."/>
            <person name="Marinier E."/>
            <person name="Hugot J.P."/>
            <person name="Ruemmele F."/>
            <person name="Dufier J.L."/>
            <person name="Roche O."/>
            <person name="Bodemer C."/>
            <person name="Colomb V."/>
            <person name="Talbotec C."/>
            <person name="Lacaille F."/>
            <person name="Campeotto F."/>
            <person name="Cerf-Bensussan N."/>
            <person name="Janecke A.R."/>
            <person name="Mueller T."/>
            <person name="Koletzko S."/>
            <person name="Bonnefont J.P."/>
            <person name="Lyonnet S."/>
            <person name="Munnich A."/>
            <person name="Poirier F."/>
            <person name="Smahi A."/>
        </authorList>
    </citation>
    <scope>VARIANTS DIAR3 83-GLU--LEU-252 DEL; CYS-148; CYS-163 AND SER-168</scope>
    <scope>INVOLVEMENT IN DIAR3</scope>
</reference>
<reference key="16">
    <citation type="journal article" date="2017" name="BMJ Case Rep.">
        <title>Syndromic congenital diarrhoea: new SPINT2 mutation identified in the UAE.</title>
        <authorList>
            <person name="Bou Chaaya S."/>
            <person name="Eason J.D."/>
            <person name="Ofoegbu B.N."/>
        </authorList>
    </citation>
    <scope>VARIANT DIAR3 HIS-148</scope>
</reference>
<reference key="17">
    <citation type="journal article" date="2018" name="Am. J. Med. Genet. A">
        <title>Congenital sodium diarrhea and chorioretinal coloboma with optic disc coloboma in a patient with biallelic SPINT2 mutations, including p.(Tyr163Cys).</title>
        <authorList>
            <person name="Hirabayashi K.E."/>
            <person name="Moore A.T."/>
            <person name="Mendelsohn B.A."/>
            <person name="Taft R.J."/>
            <person name="Chawla A."/>
            <person name="Perry D."/>
            <person name="Henry D."/>
            <person name="Slavotinek A."/>
        </authorList>
    </citation>
    <scope>VARIANT DIAR3 CYS-163</scope>
</reference>
<reference key="18">
    <citation type="journal article" date="2019" name="Hum. Mol. Genet.">
        <title>SPINT2 (HAI-2) missense variants identified in congenital sodium diarrhea/tufting enteropathy affect the ability of HAI-2 to inhibit prostasin but not matriptase.</title>
        <authorList>
            <person name="Holt-Danborg L."/>
            <person name="Vodopiutz J."/>
            <person name="Nonboe A.W."/>
            <person name="De Laffolie J."/>
            <person name="Skovbjerg S."/>
            <person name="Wolters V.M."/>
            <person name="Mueller T."/>
            <person name="Hetzer B."/>
            <person name="Querfurt A."/>
            <person name="Zimmer K.P."/>
            <person name="Jensen J.K."/>
            <person name="Entenmann A."/>
            <person name="Heinz-Erian P."/>
            <person name="Vogel L.K."/>
            <person name="Janecke A.R."/>
        </authorList>
    </citation>
    <scope>VARIANTS DIAR3 149-TRP--LEU-252 DEL; VAL-161 AND CYS-163</scope>
    <scope>CHARACTERIZATION OF VARIANTS DIAR3 VAL-161; CYS-163 AND SER-168</scope>
    <scope>FUNCTION</scope>
</reference>
<reference key="19">
    <citation type="journal article" date="2024" name="Hum. Mol. Genet.">
        <title>SPINT2 mutations in the Kunitz domain 2 found in SCSD patients inactivate HAI-2 as prostasin inhibitor via abnormal protein folding and N-glycosylation.</title>
        <authorList>
            <person name="Huang N."/>
            <person name="Wang Q."/>
            <person name="Bernard R.B."/>
            <person name="Chen C.Y."/>
            <person name="Hu J.M."/>
            <person name="Wang J.K."/>
            <person name="Chan K.S."/>
            <person name="Johnson M.D."/>
            <person name="Lin C.Y."/>
        </authorList>
    </citation>
    <scope>CHARACTERIZATION OF VARIANTS DIAR3 HIS-148; CYS-148 AND CYS-163</scope>
</reference>
<comment type="function">
    <text evidence="9 11 14 17 18">Inhibitor of HGFAC (PubMed:9346890). Also inhibits plasmin, and plasma and tissue kallikrein (PubMed:9115294). Inhibits serine protease activity of TMPRSS13 (PubMed:20977675, PubMed:28710277). Inhibits serine protease activity of ST14/matriptase and PRSS8/prostasin in vitro (PubMed:28710277, PubMed:30445423).</text>
</comment>
<comment type="subunit">
    <text evidence="11 15">Interacts with TMPRSS13; the interaction promotes the phosphorylation and cell membrane localization of TMPRSS13.</text>
</comment>
<comment type="subcellular location">
    <subcellularLocation>
        <location evidence="11 15">Cell membrane</location>
        <topology evidence="2">Single-pass type I membrane protein</topology>
    </subcellularLocation>
    <subcellularLocation>
        <location evidence="11">Cytoplasm</location>
    </subcellularLocation>
</comment>
<comment type="alternative products">
    <event type="alternative splicing"/>
    <isoform>
        <id>O43291-1</id>
        <name>1</name>
        <sequence type="displayed"/>
    </isoform>
    <isoform>
        <id>O43291-2</id>
        <name>2</name>
        <sequence type="described" ref="VSP_043680"/>
    </isoform>
</comment>
<comment type="tissue specificity">
    <text evidence="18">Expressed in placenta, kidney, pancreas, prostate, testis, thymus, and trachea.</text>
</comment>
<comment type="domain">
    <text>This inhibitor contains two inhibitory domains.</text>
</comment>
<comment type="disease" evidence="7 8 10 12 13 14 16">
    <disease id="DI-01417">
        <name>Diarrhea 3, secretory sodium, congenital, with or without other congenital anomalies</name>
        <acronym>DIAR3</acronym>
        <description>A disease characterized by life-threatening secretory diarrhea, severe metabolic acidosis and hyponatremia. Hyponatremia is secondary to extraordinarily high fecal sodium loss, with low or normal excretion of urinary sodium, in the absence of infectious, autoimmune and endocrine causes.</description>
        <dbReference type="MIM" id="270420"/>
    </disease>
    <text>The disease is caused by variants affecting the gene represented in this entry.</text>
</comment>
<accession>O43291</accession>
<accession>A8K667</accession>
<accession>B4DLU1</accession>
<accession>O00271</accession>
<accession>O14895</accession>
<accession>Q5TZQ3</accession>
<accession>Q969E0</accession>
<feature type="signal peptide" evidence="5 17">
    <location>
        <begin position="1"/>
        <end position="27"/>
    </location>
</feature>
<feature type="chain" id="PRO_0000016885" description="Kunitz-type protease inhibitor 2">
    <location>
        <begin position="28"/>
        <end position="252"/>
    </location>
</feature>
<feature type="topological domain" description="Extracellular" evidence="2">
    <location>
        <begin position="28"/>
        <end position="197"/>
    </location>
</feature>
<feature type="transmembrane region" description="Helical" evidence="2">
    <location>
        <begin position="198"/>
        <end position="218"/>
    </location>
</feature>
<feature type="topological domain" description="Cytoplasmic" evidence="2">
    <location>
        <begin position="219"/>
        <end position="252"/>
    </location>
</feature>
<feature type="domain" description="BPTI/Kunitz inhibitor 1" evidence="3">
    <location>
        <begin position="38"/>
        <end position="88"/>
    </location>
</feature>
<feature type="domain" description="BPTI/Kunitz inhibitor 2" evidence="3">
    <location>
        <begin position="133"/>
        <end position="183"/>
    </location>
</feature>
<feature type="region of interest" description="Disordered" evidence="4">
    <location>
        <begin position="100"/>
        <end position="122"/>
    </location>
</feature>
<feature type="compositionally biased region" description="Polar residues" evidence="4">
    <location>
        <begin position="100"/>
        <end position="111"/>
    </location>
</feature>
<feature type="site" description="Reactive bond" evidence="1">
    <location>
        <begin position="48"/>
        <end position="49"/>
    </location>
</feature>
<feature type="site" description="Reactive bond" evidence="1">
    <location>
        <begin position="143"/>
        <end position="144"/>
    </location>
</feature>
<feature type="glycosylation site" description="N-linked (GlcNAc...) asparagine" evidence="2">
    <location>
        <position position="57"/>
    </location>
</feature>
<feature type="glycosylation site" description="N-linked (GlcNAc...) asparagine" evidence="2">
    <location>
        <position position="94"/>
    </location>
</feature>
<feature type="disulfide bond" evidence="3">
    <location>
        <begin position="38"/>
        <end position="88"/>
    </location>
</feature>
<feature type="disulfide bond" evidence="3">
    <location>
        <begin position="47"/>
        <end position="71"/>
    </location>
</feature>
<feature type="disulfide bond" evidence="3">
    <location>
        <begin position="63"/>
        <end position="84"/>
    </location>
</feature>
<feature type="disulfide bond" evidence="3">
    <location>
        <begin position="133"/>
        <end position="183"/>
    </location>
</feature>
<feature type="disulfide bond" evidence="3">
    <location>
        <begin position="142"/>
        <end position="166"/>
    </location>
</feature>
<feature type="disulfide bond" evidence="3">
    <location>
        <begin position="158"/>
        <end position="179"/>
    </location>
</feature>
<feature type="splice variant" id="VSP_043680" description="In isoform 2." evidence="19">
    <location>
        <begin position="36"/>
        <end position="92"/>
    </location>
</feature>
<feature type="sequence variant" id="VAR_089322" description="In DIAR3; likely pathogenic." evidence="10">
    <location>
        <begin position="83"/>
        <end position="252"/>
    </location>
</feature>
<feature type="sequence variant" id="VAR_089323" description="In DIAR3; likely pathogenic; results in decreased inhibition of prostasin due to abnormal SPINT2 glycosylation; dbSNP:rs1279737892." evidence="10 16">
    <original>R</original>
    <variation>C</variation>
    <location>
        <position position="148"/>
    </location>
</feature>
<feature type="sequence variant" id="VAR_089324" description="In DIAR3; likely pathogenic; results in decreased inhibition of prostasin due to abnormal SPINT2 glycosylation; dbSNP:rs1353175955." evidence="12 16">
    <original>R</original>
    <variation>H</variation>
    <location>
        <position position="148"/>
    </location>
</feature>
<feature type="sequence variant" id="VAR_089325" description="In DIAR3; likely pathogenic." evidence="14">
    <location>
        <begin position="149"/>
        <end position="252"/>
    </location>
</feature>
<feature type="sequence variant" id="VAR_089326" description="In DIAR3; reduced peptidase inhibitor activity toward prostasin." evidence="14">
    <original>F</original>
    <variation>V</variation>
    <location>
        <position position="161"/>
    </location>
</feature>
<feature type="sequence variant" id="VAR_058718" description="In DIAR3; pathogenic; has a significantly reduced ability to inhibit trypsin compared to wild-type; reduced peptidase inhibitor activity toward prostasin; decreased inhibition of prostasin is due to abnormal SPINT2 glycosylation; dbSNP:rs121908403." evidence="7 8 10 13 14 16">
    <original>Y</original>
    <variation>C</variation>
    <location>
        <position position="163"/>
    </location>
</feature>
<feature type="sequence variant" id="VAR_089327" description="In DIAR3; likely pathogenic; reduced peptidase inhibitor activity toward prostasin; dbSNP:rs606231284." evidence="10 14">
    <original>G</original>
    <variation>S</variation>
    <location>
        <position position="168"/>
    </location>
</feature>
<feature type="sequence variant" id="VAR_012482" description="In dbSNP:rs11548457." evidence="6">
    <original>V</original>
    <variation>L</variation>
    <location>
        <position position="200"/>
    </location>
</feature>
<feature type="sequence conflict" description="In Ref. 3; AAB84031." evidence="20" ref="3">
    <original>Q</original>
    <variation>H</variation>
    <location>
        <position position="3"/>
    </location>
</feature>
<feature type="sequence conflict" description="In Ref. 1; BAA25024." evidence="20" ref="1">
    <original>R</original>
    <variation>P</variation>
    <location>
        <position position="11"/>
    </location>
</feature>
<feature type="sequence conflict" description="In Ref. 3; AAB84031." evidence="20" ref="3">
    <original>R</original>
    <variation>K</variation>
    <location>
        <position position="53"/>
    </location>
</feature>
<feature type="sequence conflict" description="In Ref. 3; AAB84031." evidence="20" ref="3">
    <original>D</original>
    <variation>H</variation>
    <location>
        <position position="240"/>
    </location>
</feature>
<feature type="turn" evidence="21">
    <location>
        <begin position="36"/>
        <end position="38"/>
    </location>
</feature>
<feature type="strand" evidence="21">
    <location>
        <begin position="51"/>
        <end position="57"/>
    </location>
</feature>
<feature type="turn" evidence="21">
    <location>
        <begin position="58"/>
        <end position="61"/>
    </location>
</feature>
<feature type="strand" evidence="21">
    <location>
        <begin position="62"/>
        <end position="68"/>
    </location>
</feature>
<feature type="strand" evidence="21">
    <location>
        <begin position="70"/>
        <end position="72"/>
    </location>
</feature>
<feature type="strand" evidence="21">
    <location>
        <begin position="78"/>
        <end position="80"/>
    </location>
</feature>
<feature type="helix" evidence="21">
    <location>
        <begin position="81"/>
        <end position="87"/>
    </location>
</feature>